<accession>Q9KP07</accession>
<proteinExistence type="inferred from homology"/>
<reference key="1">
    <citation type="journal article" date="2000" name="Nature">
        <title>DNA sequence of both chromosomes of the cholera pathogen Vibrio cholerae.</title>
        <authorList>
            <person name="Heidelberg J.F."/>
            <person name="Eisen J.A."/>
            <person name="Nelson W.C."/>
            <person name="Clayton R.A."/>
            <person name="Gwinn M.L."/>
            <person name="Dodson R.J."/>
            <person name="Haft D.H."/>
            <person name="Hickey E.K."/>
            <person name="Peterson J.D."/>
            <person name="Umayam L.A."/>
            <person name="Gill S.R."/>
            <person name="Nelson K.E."/>
            <person name="Read T.D."/>
            <person name="Tettelin H."/>
            <person name="Richardson D.L."/>
            <person name="Ermolaeva M.D."/>
            <person name="Vamathevan J.J."/>
            <person name="Bass S."/>
            <person name="Qin H."/>
            <person name="Dragoi I."/>
            <person name="Sellers P."/>
            <person name="McDonald L.A."/>
            <person name="Utterback T.R."/>
            <person name="Fleischmann R.D."/>
            <person name="Nierman W.C."/>
            <person name="White O."/>
            <person name="Salzberg S.L."/>
            <person name="Smith H.O."/>
            <person name="Colwell R.R."/>
            <person name="Mekalanos J.J."/>
            <person name="Venter J.C."/>
            <person name="Fraser C.M."/>
        </authorList>
    </citation>
    <scope>NUCLEOTIDE SEQUENCE [LARGE SCALE GENOMIC DNA]</scope>
    <source>
        <strain>ATCC 39315 / El Tor Inaba N16961</strain>
    </source>
</reference>
<dbReference type="EMBL" id="AE003852">
    <property type="protein sequence ID" value="AAF95713.1"/>
    <property type="molecule type" value="Genomic_DNA"/>
</dbReference>
<dbReference type="PIR" id="B82061">
    <property type="entry name" value="B82061"/>
</dbReference>
<dbReference type="RefSeq" id="NP_232200.1">
    <property type="nucleotide sequence ID" value="NC_002505.1"/>
</dbReference>
<dbReference type="RefSeq" id="WP_000135216.1">
    <property type="nucleotide sequence ID" value="NZ_LT906614.1"/>
</dbReference>
<dbReference type="SMR" id="Q9KP07"/>
<dbReference type="STRING" id="243277.VC_2572"/>
<dbReference type="DNASU" id="2615589"/>
<dbReference type="EnsemblBacteria" id="AAF95713">
    <property type="protein sequence ID" value="AAF95713"/>
    <property type="gene ID" value="VC_2572"/>
</dbReference>
<dbReference type="GeneID" id="88785131"/>
<dbReference type="KEGG" id="vch:VC_2572"/>
<dbReference type="PATRIC" id="fig|243277.26.peg.2451"/>
<dbReference type="eggNOG" id="COG0522">
    <property type="taxonomic scope" value="Bacteria"/>
</dbReference>
<dbReference type="HOGENOM" id="CLU_092403_0_2_6"/>
<dbReference type="Proteomes" id="UP000000584">
    <property type="component" value="Chromosome 1"/>
</dbReference>
<dbReference type="GO" id="GO:0015935">
    <property type="term" value="C:small ribosomal subunit"/>
    <property type="evidence" value="ECO:0000318"/>
    <property type="project" value="GO_Central"/>
</dbReference>
<dbReference type="GO" id="GO:0019843">
    <property type="term" value="F:rRNA binding"/>
    <property type="evidence" value="ECO:0000318"/>
    <property type="project" value="GO_Central"/>
</dbReference>
<dbReference type="GO" id="GO:0003735">
    <property type="term" value="F:structural constituent of ribosome"/>
    <property type="evidence" value="ECO:0000318"/>
    <property type="project" value="GO_Central"/>
</dbReference>
<dbReference type="GO" id="GO:0042274">
    <property type="term" value="P:ribosomal small subunit biogenesis"/>
    <property type="evidence" value="ECO:0000318"/>
    <property type="project" value="GO_Central"/>
</dbReference>
<dbReference type="GO" id="GO:0006412">
    <property type="term" value="P:translation"/>
    <property type="evidence" value="ECO:0007669"/>
    <property type="project" value="UniProtKB-UniRule"/>
</dbReference>
<dbReference type="CDD" id="cd00165">
    <property type="entry name" value="S4"/>
    <property type="match status" value="1"/>
</dbReference>
<dbReference type="FunFam" id="1.10.1050.10:FF:000001">
    <property type="entry name" value="30S ribosomal protein S4"/>
    <property type="match status" value="1"/>
</dbReference>
<dbReference type="FunFam" id="3.10.290.10:FF:000001">
    <property type="entry name" value="30S ribosomal protein S4"/>
    <property type="match status" value="1"/>
</dbReference>
<dbReference type="Gene3D" id="1.10.1050.10">
    <property type="entry name" value="Ribosomal Protein S4 Delta 41, Chain A, domain 1"/>
    <property type="match status" value="1"/>
</dbReference>
<dbReference type="Gene3D" id="3.10.290.10">
    <property type="entry name" value="RNA-binding S4 domain"/>
    <property type="match status" value="1"/>
</dbReference>
<dbReference type="HAMAP" id="MF_01306_B">
    <property type="entry name" value="Ribosomal_uS4_B"/>
    <property type="match status" value="1"/>
</dbReference>
<dbReference type="InterPro" id="IPR022801">
    <property type="entry name" value="Ribosomal_uS4"/>
</dbReference>
<dbReference type="InterPro" id="IPR005709">
    <property type="entry name" value="Ribosomal_uS4_bac-type"/>
</dbReference>
<dbReference type="InterPro" id="IPR018079">
    <property type="entry name" value="Ribosomal_uS4_CS"/>
</dbReference>
<dbReference type="InterPro" id="IPR001912">
    <property type="entry name" value="Ribosomal_uS4_N"/>
</dbReference>
<dbReference type="InterPro" id="IPR002942">
    <property type="entry name" value="S4_RNA-bd"/>
</dbReference>
<dbReference type="InterPro" id="IPR036986">
    <property type="entry name" value="S4_RNA-bd_sf"/>
</dbReference>
<dbReference type="NCBIfam" id="NF003717">
    <property type="entry name" value="PRK05327.1"/>
    <property type="match status" value="1"/>
</dbReference>
<dbReference type="NCBIfam" id="TIGR01017">
    <property type="entry name" value="rpsD_bact"/>
    <property type="match status" value="1"/>
</dbReference>
<dbReference type="PANTHER" id="PTHR11831">
    <property type="entry name" value="30S 40S RIBOSOMAL PROTEIN"/>
    <property type="match status" value="1"/>
</dbReference>
<dbReference type="PANTHER" id="PTHR11831:SF4">
    <property type="entry name" value="SMALL RIBOSOMAL SUBUNIT PROTEIN US4M"/>
    <property type="match status" value="1"/>
</dbReference>
<dbReference type="Pfam" id="PF00163">
    <property type="entry name" value="Ribosomal_S4"/>
    <property type="match status" value="1"/>
</dbReference>
<dbReference type="Pfam" id="PF01479">
    <property type="entry name" value="S4"/>
    <property type="match status" value="1"/>
</dbReference>
<dbReference type="SMART" id="SM01390">
    <property type="entry name" value="Ribosomal_S4"/>
    <property type="match status" value="1"/>
</dbReference>
<dbReference type="SMART" id="SM00363">
    <property type="entry name" value="S4"/>
    <property type="match status" value="1"/>
</dbReference>
<dbReference type="SUPFAM" id="SSF55174">
    <property type="entry name" value="Alpha-L RNA-binding motif"/>
    <property type="match status" value="1"/>
</dbReference>
<dbReference type="PROSITE" id="PS00632">
    <property type="entry name" value="RIBOSOMAL_S4"/>
    <property type="match status" value="1"/>
</dbReference>
<dbReference type="PROSITE" id="PS50889">
    <property type="entry name" value="S4"/>
    <property type="match status" value="1"/>
</dbReference>
<protein>
    <recommendedName>
        <fullName evidence="1">Small ribosomal subunit protein uS4</fullName>
    </recommendedName>
    <alternativeName>
        <fullName evidence="2">30S ribosomal protein S4</fullName>
    </alternativeName>
</protein>
<gene>
    <name evidence="1" type="primary">rpsD</name>
    <name type="ordered locus">VC_2572</name>
</gene>
<feature type="chain" id="PRO_0000132490" description="Small ribosomal subunit protein uS4">
    <location>
        <begin position="1"/>
        <end position="206"/>
    </location>
</feature>
<feature type="domain" description="S4 RNA-binding" evidence="1">
    <location>
        <begin position="96"/>
        <end position="158"/>
    </location>
</feature>
<sequence>MARYLGPKLKLSRREGTDLFLKSGVRAIDTKCKIDNAPGVHGARRGRLSEYGVQLREKQKVRRIYGVLEKQFRNYYKEAARLKGNTGENLLQLLEGRLDNVVYRMGFGATRAEARQLVSHKAILVNGKVVNVPSFNVAANDVVAVREKAKKQSRIKAALEVAEQREKPTWIEVDVNTMEGTFKRMPERSDLSADINEQLIVELYSK</sequence>
<name>RS4_VIBCH</name>
<comment type="function">
    <text evidence="1">One of the primary rRNA binding proteins, it binds directly to 16S rRNA where it nucleates assembly of the body of the 30S subunit.</text>
</comment>
<comment type="function">
    <text evidence="1">With S5 and S12 plays an important role in translational accuracy.</text>
</comment>
<comment type="subunit">
    <text evidence="1">Part of the 30S ribosomal subunit. Contacts protein S5. The interaction surface between S4 and S5 is involved in control of translational fidelity.</text>
</comment>
<comment type="similarity">
    <text evidence="1">Belongs to the universal ribosomal protein uS4 family.</text>
</comment>
<organism>
    <name type="scientific">Vibrio cholerae serotype O1 (strain ATCC 39315 / El Tor Inaba N16961)</name>
    <dbReference type="NCBI Taxonomy" id="243277"/>
    <lineage>
        <taxon>Bacteria</taxon>
        <taxon>Pseudomonadati</taxon>
        <taxon>Pseudomonadota</taxon>
        <taxon>Gammaproteobacteria</taxon>
        <taxon>Vibrionales</taxon>
        <taxon>Vibrionaceae</taxon>
        <taxon>Vibrio</taxon>
    </lineage>
</organism>
<evidence type="ECO:0000255" key="1">
    <source>
        <dbReference type="HAMAP-Rule" id="MF_01306"/>
    </source>
</evidence>
<evidence type="ECO:0000305" key="2"/>
<keyword id="KW-1185">Reference proteome</keyword>
<keyword id="KW-0687">Ribonucleoprotein</keyword>
<keyword id="KW-0689">Ribosomal protein</keyword>
<keyword id="KW-0694">RNA-binding</keyword>
<keyword id="KW-0699">rRNA-binding</keyword>